<dbReference type="EC" id="3.1.-.-"/>
<dbReference type="EMBL" id="AP003246">
    <property type="protein sequence ID" value="BAB93254.1"/>
    <property type="molecule type" value="Genomic_DNA"/>
</dbReference>
<dbReference type="EMBL" id="AP003266">
    <property type="protein sequence ID" value="BAB64186.1"/>
    <property type="molecule type" value="Genomic_DNA"/>
</dbReference>
<dbReference type="EMBL" id="AP008207">
    <property type="protein sequence ID" value="BAF07229.1"/>
    <property type="status" value="ALT_SEQ"/>
    <property type="molecule type" value="Genomic_DNA"/>
</dbReference>
<dbReference type="EMBL" id="AP014957">
    <property type="status" value="NOT_ANNOTATED_CDS"/>
    <property type="molecule type" value="Genomic_DNA"/>
</dbReference>
<dbReference type="EMBL" id="Z34270">
    <property type="protein sequence ID" value="CAA84024.1"/>
    <property type="molecule type" value="mRNA"/>
</dbReference>
<dbReference type="RefSeq" id="XP_015620872.1">
    <property type="nucleotide sequence ID" value="XM_015765386.1"/>
</dbReference>
<dbReference type="SMR" id="Q0JG99"/>
<dbReference type="FunCoup" id="Q0JG99">
    <property type="interactions" value="14"/>
</dbReference>
<dbReference type="STRING" id="39947.Q0JG99"/>
<dbReference type="ESTHER" id="orysa-pir7b">
    <property type="family name" value="Hydroxynitrile_lyase"/>
</dbReference>
<dbReference type="PaxDb" id="39947-Q0JG99"/>
<dbReference type="KEGG" id="dosa:Os01g0934800"/>
<dbReference type="eggNOG" id="ENOG502QQCC">
    <property type="taxonomic scope" value="Eukaryota"/>
</dbReference>
<dbReference type="HOGENOM" id="CLU_046066_0_1_1"/>
<dbReference type="InParanoid" id="Q0JG99"/>
<dbReference type="OrthoDB" id="408373at2759"/>
<dbReference type="Proteomes" id="UP000000763">
    <property type="component" value="Chromosome 1"/>
</dbReference>
<dbReference type="Proteomes" id="UP000059680">
    <property type="component" value="Chromosome 1"/>
</dbReference>
<dbReference type="GO" id="GO:0080030">
    <property type="term" value="F:methyl indole-3-acetate esterase activity"/>
    <property type="evidence" value="ECO:0000318"/>
    <property type="project" value="GO_Central"/>
</dbReference>
<dbReference type="GO" id="GO:0080032">
    <property type="term" value="F:methyl jasmonate esterase activity"/>
    <property type="evidence" value="ECO:0000318"/>
    <property type="project" value="GO_Central"/>
</dbReference>
<dbReference type="GO" id="GO:0080031">
    <property type="term" value="F:methyl salicylate esterase activity"/>
    <property type="evidence" value="ECO:0000318"/>
    <property type="project" value="GO_Central"/>
</dbReference>
<dbReference type="GO" id="GO:0009694">
    <property type="term" value="P:jasmonic acid metabolic process"/>
    <property type="evidence" value="ECO:0000318"/>
    <property type="project" value="GO_Central"/>
</dbReference>
<dbReference type="GO" id="GO:0009696">
    <property type="term" value="P:salicylic acid metabolic process"/>
    <property type="evidence" value="ECO:0000318"/>
    <property type="project" value="GO_Central"/>
</dbReference>
<dbReference type="FunFam" id="3.40.50.1820:FF:000051">
    <property type="entry name" value="(S)-hydroxynitrile lyase"/>
    <property type="match status" value="1"/>
</dbReference>
<dbReference type="Gene3D" id="3.40.50.1820">
    <property type="entry name" value="alpha/beta hydrolase"/>
    <property type="match status" value="1"/>
</dbReference>
<dbReference type="InterPro" id="IPR000073">
    <property type="entry name" value="AB_hydrolase_1"/>
</dbReference>
<dbReference type="InterPro" id="IPR029058">
    <property type="entry name" value="AB_hydrolase_fold"/>
</dbReference>
<dbReference type="InterPro" id="IPR045889">
    <property type="entry name" value="MES/HNL"/>
</dbReference>
<dbReference type="PANTHER" id="PTHR10992:SF1004">
    <property type="entry name" value="ESTERASE PIR7B"/>
    <property type="match status" value="1"/>
</dbReference>
<dbReference type="PANTHER" id="PTHR10992">
    <property type="entry name" value="METHYLESTERASE FAMILY MEMBER"/>
    <property type="match status" value="1"/>
</dbReference>
<dbReference type="Pfam" id="PF12697">
    <property type="entry name" value="Abhydrolase_6"/>
    <property type="match status" value="1"/>
</dbReference>
<dbReference type="SUPFAM" id="SSF53474">
    <property type="entry name" value="alpha/beta-Hydrolases"/>
    <property type="match status" value="1"/>
</dbReference>
<dbReference type="PROSITE" id="PS00120">
    <property type="entry name" value="LIPASE_SER"/>
    <property type="match status" value="1"/>
</dbReference>
<keyword id="KW-0378">Hydrolase</keyword>
<keyword id="KW-1185">Reference proteome</keyword>
<keyword id="KW-0719">Serine esterase</keyword>
<sequence>MEISSSSKKHFILVHGLCHGAWCWYRVVAALRAAGHRATALDMAASGAHPARVDEVGTFEEYSRPLLDAVAAAAAPGERLVLVGHSHGGLSVALAMERFPDKVAAAVFVAAAMPCVGKHMGVPTEEFMRRTAPEGLLMDCEMVAINNSQGSGVAINLGPTFLAQKYYQQSPAEDLALAKMLVRPGNQFMDDPVMKDESLLTNGNYGSVKKVYVIAKADSSSTEEMQRWMVAMSPGTDVEEIAGADHAVMNSKPRELCDILIKIANKYE</sequence>
<comment type="function">
    <text evidence="2">Exhibits esterase activity towards naphthol AS-acetate in vitro.</text>
</comment>
<comment type="induction">
    <text evidence="2">By infection of leaves with certain strains of P.syringae pv syringae.</text>
</comment>
<comment type="similarity">
    <text evidence="3">Belongs to the AB hydrolase superfamily.</text>
</comment>
<comment type="sequence caution" evidence="3">
    <conflict type="erroneous gene model prediction">
        <sequence resource="EMBL-CDS" id="BAF07229"/>
    </conflict>
</comment>
<organism>
    <name type="scientific">Oryza sativa subsp. japonica</name>
    <name type="common">Rice</name>
    <dbReference type="NCBI Taxonomy" id="39947"/>
    <lineage>
        <taxon>Eukaryota</taxon>
        <taxon>Viridiplantae</taxon>
        <taxon>Streptophyta</taxon>
        <taxon>Embryophyta</taxon>
        <taxon>Tracheophyta</taxon>
        <taxon>Spermatophyta</taxon>
        <taxon>Magnoliopsida</taxon>
        <taxon>Liliopsida</taxon>
        <taxon>Poales</taxon>
        <taxon>Poaceae</taxon>
        <taxon>BOP clade</taxon>
        <taxon>Oryzoideae</taxon>
        <taxon>Oryzeae</taxon>
        <taxon>Oryzinae</taxon>
        <taxon>Oryza</taxon>
        <taxon>Oryza sativa</taxon>
    </lineage>
</organism>
<gene>
    <name type="primary">PIR7B</name>
    <name type="ordered locus">Os01g0934800</name>
    <name type="ordered locus">LOC_Os01g70850</name>
    <name type="ORF">P0423A12.26</name>
    <name type="ORF">P0492G09.7</name>
</gene>
<protein>
    <recommendedName>
        <fullName>Esterase PIR7B</fullName>
        <ecNumber>3.1.-.-</ecNumber>
    </recommendedName>
</protein>
<accession>Q0JG99</accession>
<accession>Q43360</accession>
<feature type="chain" id="PRO_0000070301" description="Esterase PIR7B">
    <location>
        <begin position="1"/>
        <end position="268"/>
    </location>
</feature>
<feature type="active site" description="Acyl-ester intermediate">
    <location>
        <position position="86"/>
    </location>
</feature>
<feature type="active site" description="Charge relay system" evidence="1">
    <location>
        <position position="218"/>
    </location>
</feature>
<feature type="active site" description="Charge relay system" evidence="1">
    <location>
        <position position="246"/>
    </location>
</feature>
<proteinExistence type="evidence at transcript level"/>
<name>PIR7B_ORYSJ</name>
<reference key="1">
    <citation type="journal article" date="2002" name="Nature">
        <title>The genome sequence and structure of rice chromosome 1.</title>
        <authorList>
            <person name="Sasaki T."/>
            <person name="Matsumoto T."/>
            <person name="Yamamoto K."/>
            <person name="Sakata K."/>
            <person name="Baba T."/>
            <person name="Katayose Y."/>
            <person name="Wu J."/>
            <person name="Niimura Y."/>
            <person name="Cheng Z."/>
            <person name="Nagamura Y."/>
            <person name="Antonio B.A."/>
            <person name="Kanamori H."/>
            <person name="Hosokawa S."/>
            <person name="Masukawa M."/>
            <person name="Arikawa K."/>
            <person name="Chiden Y."/>
            <person name="Hayashi M."/>
            <person name="Okamoto M."/>
            <person name="Ando T."/>
            <person name="Aoki H."/>
            <person name="Arita K."/>
            <person name="Hamada M."/>
            <person name="Harada C."/>
            <person name="Hijishita S."/>
            <person name="Honda M."/>
            <person name="Ichikawa Y."/>
            <person name="Idonuma A."/>
            <person name="Iijima M."/>
            <person name="Ikeda M."/>
            <person name="Ikeno M."/>
            <person name="Ito S."/>
            <person name="Ito T."/>
            <person name="Ito Y."/>
            <person name="Ito Y."/>
            <person name="Iwabuchi A."/>
            <person name="Kamiya K."/>
            <person name="Karasawa W."/>
            <person name="Katagiri S."/>
            <person name="Kikuta A."/>
            <person name="Kobayashi N."/>
            <person name="Kono I."/>
            <person name="Machita K."/>
            <person name="Maehara T."/>
            <person name="Mizuno H."/>
            <person name="Mizubayashi T."/>
            <person name="Mukai Y."/>
            <person name="Nagasaki H."/>
            <person name="Nakashima M."/>
            <person name="Nakama Y."/>
            <person name="Nakamichi Y."/>
            <person name="Nakamura M."/>
            <person name="Namiki N."/>
            <person name="Negishi M."/>
            <person name="Ohta I."/>
            <person name="Ono N."/>
            <person name="Saji S."/>
            <person name="Sakai K."/>
            <person name="Shibata M."/>
            <person name="Shimokawa T."/>
            <person name="Shomura A."/>
            <person name="Song J."/>
            <person name="Takazaki Y."/>
            <person name="Terasawa K."/>
            <person name="Tsuji K."/>
            <person name="Waki K."/>
            <person name="Yamagata H."/>
            <person name="Yamane H."/>
            <person name="Yoshiki S."/>
            <person name="Yoshihara R."/>
            <person name="Yukawa K."/>
            <person name="Zhong H."/>
            <person name="Iwama H."/>
            <person name="Endo T."/>
            <person name="Ito H."/>
            <person name="Hahn J.H."/>
            <person name="Kim H.-I."/>
            <person name="Eun M.-Y."/>
            <person name="Yano M."/>
            <person name="Jiang J."/>
            <person name="Gojobori T."/>
        </authorList>
    </citation>
    <scope>NUCLEOTIDE SEQUENCE [LARGE SCALE GENOMIC DNA]</scope>
    <source>
        <strain>cv. Nipponbare</strain>
    </source>
</reference>
<reference key="2">
    <citation type="journal article" date="2005" name="Nature">
        <title>The map-based sequence of the rice genome.</title>
        <authorList>
            <consortium name="International rice genome sequencing project (IRGSP)"/>
        </authorList>
    </citation>
    <scope>NUCLEOTIDE SEQUENCE [LARGE SCALE GENOMIC DNA]</scope>
    <source>
        <strain>cv. Nipponbare</strain>
    </source>
</reference>
<reference key="3">
    <citation type="journal article" date="2008" name="Nucleic Acids Res.">
        <title>The rice annotation project database (RAP-DB): 2008 update.</title>
        <authorList>
            <consortium name="The rice annotation project (RAP)"/>
        </authorList>
    </citation>
    <scope>GENOME REANNOTATION</scope>
    <source>
        <strain>cv. Nipponbare</strain>
    </source>
</reference>
<reference key="4">
    <citation type="journal article" date="2013" name="Rice">
        <title>Improvement of the Oryza sativa Nipponbare reference genome using next generation sequence and optical map data.</title>
        <authorList>
            <person name="Kawahara Y."/>
            <person name="de la Bastide M."/>
            <person name="Hamilton J.P."/>
            <person name="Kanamori H."/>
            <person name="McCombie W.R."/>
            <person name="Ouyang S."/>
            <person name="Schwartz D.C."/>
            <person name="Tanaka T."/>
            <person name="Wu J."/>
            <person name="Zhou S."/>
            <person name="Childs K.L."/>
            <person name="Davidson R.M."/>
            <person name="Lin H."/>
            <person name="Quesada-Ocampo L."/>
            <person name="Vaillancourt B."/>
            <person name="Sakai H."/>
            <person name="Lee S.S."/>
            <person name="Kim J."/>
            <person name="Numa H."/>
            <person name="Itoh T."/>
            <person name="Buell C.R."/>
            <person name="Matsumoto T."/>
        </authorList>
    </citation>
    <scope>GENOME REANNOTATION</scope>
    <source>
        <strain>cv. Nipponbare</strain>
    </source>
</reference>
<reference key="5">
    <citation type="journal article" date="1995" name="Physiol. Mol. Plant Pathol.">
        <title>Characterization of a rice gene induced by Pseudomonas syringae pv. syringae: requirement for the bacterial lemA gene function.</title>
        <authorList>
            <person name="Reimmann C."/>
            <person name="Mauch F."/>
            <person name="Dudler R."/>
            <person name="Hofmann C."/>
        </authorList>
        <dbReference type="AGRICOLA" id="IND20452874"/>
    </citation>
    <scope>NUCLEOTIDE SEQUENCE [MRNA] OF 7-268</scope>
    <source>
        <strain>cv. Nohrin</strain>
    </source>
</reference>
<reference key="6">
    <citation type="journal article" date="1998" name="Eur. J. Biochem.">
        <title>The defense-related rice gene Pir7b encodes an alpha/beta hydrolase fold protein exhibiting esterase activity towards naphthol AS-esters.</title>
        <authorList>
            <person name="Waespi U."/>
            <person name="Misteli B."/>
            <person name="Hasslacher M."/>
            <person name="Jandrositz A."/>
            <person name="Kohlwein S.D."/>
            <person name="Schwab H."/>
            <person name="Dudler R."/>
        </authorList>
    </citation>
    <scope>FUNCTION</scope>
    <scope>INDUCTION</scope>
</reference>
<evidence type="ECO:0000255" key="1">
    <source>
        <dbReference type="PROSITE-ProRule" id="PRU10037"/>
    </source>
</evidence>
<evidence type="ECO:0000269" key="2">
    <source>
    </source>
</evidence>
<evidence type="ECO:0000305" key="3"/>